<sequence length="162" mass="18777">MKLDQVARSLLLKEFVSGFFLAMKYFLKPKATINYPFEMGHRGPRFRGEHALRRYPNGEERCIACKLCEAICPAQAITIEAGPRRNDGTRRTTRYDIDMVKCIYCGMCQEACPVDAIVEGPNFEFSVETREELLYDKQKLLENGDRWEREIARNIAIDAPYR</sequence>
<name>NUOI_METPB</name>
<evidence type="ECO:0000255" key="1">
    <source>
        <dbReference type="HAMAP-Rule" id="MF_01351"/>
    </source>
</evidence>
<reference key="1">
    <citation type="submission" date="2008-04" db="EMBL/GenBank/DDBJ databases">
        <title>Complete sequence of chromosome of Methylobacterium populi BJ001.</title>
        <authorList>
            <consortium name="US DOE Joint Genome Institute"/>
            <person name="Copeland A."/>
            <person name="Lucas S."/>
            <person name="Lapidus A."/>
            <person name="Glavina del Rio T."/>
            <person name="Dalin E."/>
            <person name="Tice H."/>
            <person name="Bruce D."/>
            <person name="Goodwin L."/>
            <person name="Pitluck S."/>
            <person name="Chertkov O."/>
            <person name="Brettin T."/>
            <person name="Detter J.C."/>
            <person name="Han C."/>
            <person name="Kuske C.R."/>
            <person name="Schmutz J."/>
            <person name="Larimer F."/>
            <person name="Land M."/>
            <person name="Hauser L."/>
            <person name="Kyrpides N."/>
            <person name="Mikhailova N."/>
            <person name="Marx C."/>
            <person name="Richardson P."/>
        </authorList>
    </citation>
    <scope>NUCLEOTIDE SEQUENCE [LARGE SCALE GENOMIC DNA]</scope>
    <source>
        <strain>ATCC BAA-705 / NCIMB 13946 / BJ001</strain>
    </source>
</reference>
<proteinExistence type="inferred from homology"/>
<dbReference type="EC" id="7.1.1.-" evidence="1"/>
<dbReference type="EMBL" id="CP001029">
    <property type="protein sequence ID" value="ACB79187.1"/>
    <property type="molecule type" value="Genomic_DNA"/>
</dbReference>
<dbReference type="RefSeq" id="WP_012452938.1">
    <property type="nucleotide sequence ID" value="NC_010725.1"/>
</dbReference>
<dbReference type="SMR" id="B1ZA38"/>
<dbReference type="STRING" id="441620.Mpop_1011"/>
<dbReference type="KEGG" id="mpo:Mpop_1011"/>
<dbReference type="eggNOG" id="COG1143">
    <property type="taxonomic scope" value="Bacteria"/>
</dbReference>
<dbReference type="HOGENOM" id="CLU_067218_5_1_5"/>
<dbReference type="OrthoDB" id="9808559at2"/>
<dbReference type="Proteomes" id="UP000007136">
    <property type="component" value="Chromosome"/>
</dbReference>
<dbReference type="GO" id="GO:0005886">
    <property type="term" value="C:plasma membrane"/>
    <property type="evidence" value="ECO:0007669"/>
    <property type="project" value="UniProtKB-SubCell"/>
</dbReference>
<dbReference type="GO" id="GO:0051539">
    <property type="term" value="F:4 iron, 4 sulfur cluster binding"/>
    <property type="evidence" value="ECO:0007669"/>
    <property type="project" value="UniProtKB-KW"/>
</dbReference>
<dbReference type="GO" id="GO:0005506">
    <property type="term" value="F:iron ion binding"/>
    <property type="evidence" value="ECO:0007669"/>
    <property type="project" value="UniProtKB-UniRule"/>
</dbReference>
<dbReference type="GO" id="GO:0050136">
    <property type="term" value="F:NADH:ubiquinone reductase (non-electrogenic) activity"/>
    <property type="evidence" value="ECO:0007669"/>
    <property type="project" value="UniProtKB-UniRule"/>
</dbReference>
<dbReference type="GO" id="GO:0048038">
    <property type="term" value="F:quinone binding"/>
    <property type="evidence" value="ECO:0007669"/>
    <property type="project" value="UniProtKB-KW"/>
</dbReference>
<dbReference type="GO" id="GO:0009060">
    <property type="term" value="P:aerobic respiration"/>
    <property type="evidence" value="ECO:0007669"/>
    <property type="project" value="TreeGrafter"/>
</dbReference>
<dbReference type="FunFam" id="3.30.70.3270:FF:000001">
    <property type="entry name" value="NADH-quinone oxidoreductase subunit I 1"/>
    <property type="match status" value="1"/>
</dbReference>
<dbReference type="Gene3D" id="3.30.70.3270">
    <property type="match status" value="1"/>
</dbReference>
<dbReference type="HAMAP" id="MF_01351">
    <property type="entry name" value="NDH1_NuoI"/>
    <property type="match status" value="1"/>
</dbReference>
<dbReference type="InterPro" id="IPR017896">
    <property type="entry name" value="4Fe4S_Fe-S-bd"/>
</dbReference>
<dbReference type="InterPro" id="IPR017900">
    <property type="entry name" value="4Fe4S_Fe_S_CS"/>
</dbReference>
<dbReference type="InterPro" id="IPR010226">
    <property type="entry name" value="NADH_quinone_OxRdtase_chainI"/>
</dbReference>
<dbReference type="NCBIfam" id="TIGR01971">
    <property type="entry name" value="NuoI"/>
    <property type="match status" value="1"/>
</dbReference>
<dbReference type="NCBIfam" id="NF004538">
    <property type="entry name" value="PRK05888.1-4"/>
    <property type="match status" value="1"/>
</dbReference>
<dbReference type="NCBIfam" id="NF004539">
    <property type="entry name" value="PRK05888.1-5"/>
    <property type="match status" value="1"/>
</dbReference>
<dbReference type="PANTHER" id="PTHR10849:SF20">
    <property type="entry name" value="NADH DEHYDROGENASE [UBIQUINONE] IRON-SULFUR PROTEIN 8, MITOCHONDRIAL"/>
    <property type="match status" value="1"/>
</dbReference>
<dbReference type="PANTHER" id="PTHR10849">
    <property type="entry name" value="NADH DEHYDROGENASE UBIQUINONE IRON-SULFUR PROTEIN 8, MITOCHONDRIAL"/>
    <property type="match status" value="1"/>
</dbReference>
<dbReference type="Pfam" id="PF12838">
    <property type="entry name" value="Fer4_7"/>
    <property type="match status" value="1"/>
</dbReference>
<dbReference type="SUPFAM" id="SSF54862">
    <property type="entry name" value="4Fe-4S ferredoxins"/>
    <property type="match status" value="1"/>
</dbReference>
<dbReference type="PROSITE" id="PS00198">
    <property type="entry name" value="4FE4S_FER_1"/>
    <property type="match status" value="2"/>
</dbReference>
<dbReference type="PROSITE" id="PS51379">
    <property type="entry name" value="4FE4S_FER_2"/>
    <property type="match status" value="2"/>
</dbReference>
<gene>
    <name evidence="1" type="primary">nuoI</name>
    <name type="ordered locus">Mpop_1011</name>
</gene>
<comment type="function">
    <text evidence="1">NDH-1 shuttles electrons from NADH, via FMN and iron-sulfur (Fe-S) centers, to quinones in the respiratory chain. The immediate electron acceptor for the enzyme in this species is believed to be ubiquinone. Couples the redox reaction to proton translocation (for every two electrons transferred, four hydrogen ions are translocated across the cytoplasmic membrane), and thus conserves the redox energy in a proton gradient.</text>
</comment>
<comment type="catalytic activity">
    <reaction evidence="1">
        <text>a quinone + NADH + 5 H(+)(in) = a quinol + NAD(+) + 4 H(+)(out)</text>
        <dbReference type="Rhea" id="RHEA:57888"/>
        <dbReference type="ChEBI" id="CHEBI:15378"/>
        <dbReference type="ChEBI" id="CHEBI:24646"/>
        <dbReference type="ChEBI" id="CHEBI:57540"/>
        <dbReference type="ChEBI" id="CHEBI:57945"/>
        <dbReference type="ChEBI" id="CHEBI:132124"/>
    </reaction>
</comment>
<comment type="cofactor">
    <cofactor evidence="1">
        <name>[4Fe-4S] cluster</name>
        <dbReference type="ChEBI" id="CHEBI:49883"/>
    </cofactor>
    <text evidence="1">Binds 2 [4Fe-4S] clusters per subunit.</text>
</comment>
<comment type="subunit">
    <text evidence="1">NDH-1 is composed of 14 different subunits. Subunits NuoA, H, J, K, L, M, N constitute the membrane sector of the complex.</text>
</comment>
<comment type="subcellular location">
    <subcellularLocation>
        <location evidence="1">Cell inner membrane</location>
        <topology evidence="1">Peripheral membrane protein</topology>
    </subcellularLocation>
</comment>
<comment type="similarity">
    <text evidence="1">Belongs to the complex I 23 kDa subunit family.</text>
</comment>
<feature type="chain" id="PRO_1000143652" description="NADH-quinone oxidoreductase subunit I">
    <location>
        <begin position="1"/>
        <end position="162"/>
    </location>
</feature>
<feature type="domain" description="4Fe-4S ferredoxin-type 1" evidence="1">
    <location>
        <begin position="52"/>
        <end position="82"/>
    </location>
</feature>
<feature type="domain" description="4Fe-4S ferredoxin-type 2" evidence="1">
    <location>
        <begin position="93"/>
        <end position="122"/>
    </location>
</feature>
<feature type="binding site" evidence="1">
    <location>
        <position position="62"/>
    </location>
    <ligand>
        <name>[4Fe-4S] cluster</name>
        <dbReference type="ChEBI" id="CHEBI:49883"/>
        <label>1</label>
    </ligand>
</feature>
<feature type="binding site" evidence="1">
    <location>
        <position position="65"/>
    </location>
    <ligand>
        <name>[4Fe-4S] cluster</name>
        <dbReference type="ChEBI" id="CHEBI:49883"/>
        <label>1</label>
    </ligand>
</feature>
<feature type="binding site" evidence="1">
    <location>
        <position position="68"/>
    </location>
    <ligand>
        <name>[4Fe-4S] cluster</name>
        <dbReference type="ChEBI" id="CHEBI:49883"/>
        <label>1</label>
    </ligand>
</feature>
<feature type="binding site" evidence="1">
    <location>
        <position position="72"/>
    </location>
    <ligand>
        <name>[4Fe-4S] cluster</name>
        <dbReference type="ChEBI" id="CHEBI:49883"/>
        <label>2</label>
    </ligand>
</feature>
<feature type="binding site" evidence="1">
    <location>
        <position position="102"/>
    </location>
    <ligand>
        <name>[4Fe-4S] cluster</name>
        <dbReference type="ChEBI" id="CHEBI:49883"/>
        <label>2</label>
    </ligand>
</feature>
<feature type="binding site" evidence="1">
    <location>
        <position position="105"/>
    </location>
    <ligand>
        <name>[4Fe-4S] cluster</name>
        <dbReference type="ChEBI" id="CHEBI:49883"/>
        <label>2</label>
    </ligand>
</feature>
<feature type="binding site" evidence="1">
    <location>
        <position position="108"/>
    </location>
    <ligand>
        <name>[4Fe-4S] cluster</name>
        <dbReference type="ChEBI" id="CHEBI:49883"/>
        <label>2</label>
    </ligand>
</feature>
<feature type="binding site" evidence="1">
    <location>
        <position position="112"/>
    </location>
    <ligand>
        <name>[4Fe-4S] cluster</name>
        <dbReference type="ChEBI" id="CHEBI:49883"/>
        <label>1</label>
    </ligand>
</feature>
<keyword id="KW-0004">4Fe-4S</keyword>
<keyword id="KW-0997">Cell inner membrane</keyword>
<keyword id="KW-1003">Cell membrane</keyword>
<keyword id="KW-0408">Iron</keyword>
<keyword id="KW-0411">Iron-sulfur</keyword>
<keyword id="KW-0472">Membrane</keyword>
<keyword id="KW-0479">Metal-binding</keyword>
<keyword id="KW-0520">NAD</keyword>
<keyword id="KW-0874">Quinone</keyword>
<keyword id="KW-0677">Repeat</keyword>
<keyword id="KW-1278">Translocase</keyword>
<keyword id="KW-0830">Ubiquinone</keyword>
<accession>B1ZA38</accession>
<organism>
    <name type="scientific">Methylorubrum populi (strain ATCC BAA-705 / NCIMB 13946 / BJ001)</name>
    <name type="common">Methylobacterium populi</name>
    <dbReference type="NCBI Taxonomy" id="441620"/>
    <lineage>
        <taxon>Bacteria</taxon>
        <taxon>Pseudomonadati</taxon>
        <taxon>Pseudomonadota</taxon>
        <taxon>Alphaproteobacteria</taxon>
        <taxon>Hyphomicrobiales</taxon>
        <taxon>Methylobacteriaceae</taxon>
        <taxon>Methylorubrum</taxon>
    </lineage>
</organism>
<protein>
    <recommendedName>
        <fullName evidence="1">NADH-quinone oxidoreductase subunit I</fullName>
        <ecNumber evidence="1">7.1.1.-</ecNumber>
    </recommendedName>
    <alternativeName>
        <fullName evidence="1">NADH dehydrogenase I subunit I</fullName>
    </alternativeName>
    <alternativeName>
        <fullName evidence="1">NDH-1 subunit I</fullName>
    </alternativeName>
</protein>